<gene>
    <name type="primary">Fam131b</name>
</gene>
<reference key="1">
    <citation type="journal article" date="2005" name="Science">
        <title>The transcriptional landscape of the mammalian genome.</title>
        <authorList>
            <person name="Carninci P."/>
            <person name="Kasukawa T."/>
            <person name="Katayama S."/>
            <person name="Gough J."/>
            <person name="Frith M.C."/>
            <person name="Maeda N."/>
            <person name="Oyama R."/>
            <person name="Ravasi T."/>
            <person name="Lenhard B."/>
            <person name="Wells C."/>
            <person name="Kodzius R."/>
            <person name="Shimokawa K."/>
            <person name="Bajic V.B."/>
            <person name="Brenner S.E."/>
            <person name="Batalov S."/>
            <person name="Forrest A.R."/>
            <person name="Zavolan M."/>
            <person name="Davis M.J."/>
            <person name="Wilming L.G."/>
            <person name="Aidinis V."/>
            <person name="Allen J.E."/>
            <person name="Ambesi-Impiombato A."/>
            <person name="Apweiler R."/>
            <person name="Aturaliya R.N."/>
            <person name="Bailey T.L."/>
            <person name="Bansal M."/>
            <person name="Baxter L."/>
            <person name="Beisel K.W."/>
            <person name="Bersano T."/>
            <person name="Bono H."/>
            <person name="Chalk A.M."/>
            <person name="Chiu K.P."/>
            <person name="Choudhary V."/>
            <person name="Christoffels A."/>
            <person name="Clutterbuck D.R."/>
            <person name="Crowe M.L."/>
            <person name="Dalla E."/>
            <person name="Dalrymple B.P."/>
            <person name="de Bono B."/>
            <person name="Della Gatta G."/>
            <person name="di Bernardo D."/>
            <person name="Down T."/>
            <person name="Engstrom P."/>
            <person name="Fagiolini M."/>
            <person name="Faulkner G."/>
            <person name="Fletcher C.F."/>
            <person name="Fukushima T."/>
            <person name="Furuno M."/>
            <person name="Futaki S."/>
            <person name="Gariboldi M."/>
            <person name="Georgii-Hemming P."/>
            <person name="Gingeras T.R."/>
            <person name="Gojobori T."/>
            <person name="Green R.E."/>
            <person name="Gustincich S."/>
            <person name="Harbers M."/>
            <person name="Hayashi Y."/>
            <person name="Hensch T.K."/>
            <person name="Hirokawa N."/>
            <person name="Hill D."/>
            <person name="Huminiecki L."/>
            <person name="Iacono M."/>
            <person name="Ikeo K."/>
            <person name="Iwama A."/>
            <person name="Ishikawa T."/>
            <person name="Jakt M."/>
            <person name="Kanapin A."/>
            <person name="Katoh M."/>
            <person name="Kawasawa Y."/>
            <person name="Kelso J."/>
            <person name="Kitamura H."/>
            <person name="Kitano H."/>
            <person name="Kollias G."/>
            <person name="Krishnan S.P."/>
            <person name="Kruger A."/>
            <person name="Kummerfeld S.K."/>
            <person name="Kurochkin I.V."/>
            <person name="Lareau L.F."/>
            <person name="Lazarevic D."/>
            <person name="Lipovich L."/>
            <person name="Liu J."/>
            <person name="Liuni S."/>
            <person name="McWilliam S."/>
            <person name="Madan Babu M."/>
            <person name="Madera M."/>
            <person name="Marchionni L."/>
            <person name="Matsuda H."/>
            <person name="Matsuzawa S."/>
            <person name="Miki H."/>
            <person name="Mignone F."/>
            <person name="Miyake S."/>
            <person name="Morris K."/>
            <person name="Mottagui-Tabar S."/>
            <person name="Mulder N."/>
            <person name="Nakano N."/>
            <person name="Nakauchi H."/>
            <person name="Ng P."/>
            <person name="Nilsson R."/>
            <person name="Nishiguchi S."/>
            <person name="Nishikawa S."/>
            <person name="Nori F."/>
            <person name="Ohara O."/>
            <person name="Okazaki Y."/>
            <person name="Orlando V."/>
            <person name="Pang K.C."/>
            <person name="Pavan W.J."/>
            <person name="Pavesi G."/>
            <person name="Pesole G."/>
            <person name="Petrovsky N."/>
            <person name="Piazza S."/>
            <person name="Reed J."/>
            <person name="Reid J.F."/>
            <person name="Ring B.Z."/>
            <person name="Ringwald M."/>
            <person name="Rost B."/>
            <person name="Ruan Y."/>
            <person name="Salzberg S.L."/>
            <person name="Sandelin A."/>
            <person name="Schneider C."/>
            <person name="Schoenbach C."/>
            <person name="Sekiguchi K."/>
            <person name="Semple C.A."/>
            <person name="Seno S."/>
            <person name="Sessa L."/>
            <person name="Sheng Y."/>
            <person name="Shibata Y."/>
            <person name="Shimada H."/>
            <person name="Shimada K."/>
            <person name="Silva D."/>
            <person name="Sinclair B."/>
            <person name="Sperling S."/>
            <person name="Stupka E."/>
            <person name="Sugiura K."/>
            <person name="Sultana R."/>
            <person name="Takenaka Y."/>
            <person name="Taki K."/>
            <person name="Tammoja K."/>
            <person name="Tan S.L."/>
            <person name="Tang S."/>
            <person name="Taylor M.S."/>
            <person name="Tegner J."/>
            <person name="Teichmann S.A."/>
            <person name="Ueda H.R."/>
            <person name="van Nimwegen E."/>
            <person name="Verardo R."/>
            <person name="Wei C.L."/>
            <person name="Yagi K."/>
            <person name="Yamanishi H."/>
            <person name="Zabarovsky E."/>
            <person name="Zhu S."/>
            <person name="Zimmer A."/>
            <person name="Hide W."/>
            <person name="Bult C."/>
            <person name="Grimmond S.M."/>
            <person name="Teasdale R.D."/>
            <person name="Liu E.T."/>
            <person name="Brusic V."/>
            <person name="Quackenbush J."/>
            <person name="Wahlestedt C."/>
            <person name="Mattick J.S."/>
            <person name="Hume D.A."/>
            <person name="Kai C."/>
            <person name="Sasaki D."/>
            <person name="Tomaru Y."/>
            <person name="Fukuda S."/>
            <person name="Kanamori-Katayama M."/>
            <person name="Suzuki M."/>
            <person name="Aoki J."/>
            <person name="Arakawa T."/>
            <person name="Iida J."/>
            <person name="Imamura K."/>
            <person name="Itoh M."/>
            <person name="Kato T."/>
            <person name="Kawaji H."/>
            <person name="Kawagashira N."/>
            <person name="Kawashima T."/>
            <person name="Kojima M."/>
            <person name="Kondo S."/>
            <person name="Konno H."/>
            <person name="Nakano K."/>
            <person name="Ninomiya N."/>
            <person name="Nishio T."/>
            <person name="Okada M."/>
            <person name="Plessy C."/>
            <person name="Shibata K."/>
            <person name="Shiraki T."/>
            <person name="Suzuki S."/>
            <person name="Tagami M."/>
            <person name="Waki K."/>
            <person name="Watahiki A."/>
            <person name="Okamura-Oho Y."/>
            <person name="Suzuki H."/>
            <person name="Kawai J."/>
            <person name="Hayashizaki Y."/>
        </authorList>
    </citation>
    <scope>NUCLEOTIDE SEQUENCE [LARGE SCALE MRNA] (ISOFORMS 1 AND 2)</scope>
    <source>
        <strain>C57BL/6J</strain>
        <tissue>Corpus striatum</tissue>
        <tissue>Medulla oblongata</tissue>
        <tissue>Visual cortex</tissue>
    </source>
</reference>
<reference key="2">
    <citation type="journal article" date="2006" name="Mol. Cell. Proteomics">
        <title>Comprehensive identification of phosphorylation sites in postsynaptic density preparations.</title>
        <authorList>
            <person name="Trinidad J.C."/>
            <person name="Specht C.G."/>
            <person name="Thalhammer A."/>
            <person name="Schoepfer R."/>
            <person name="Burlingame A.L."/>
        </authorList>
    </citation>
    <scope>PHOSPHORYLATION [LARGE SCALE ANALYSIS] AT SER-117 AND SER-322</scope>
    <scope>IDENTIFICATION BY MASS SPECTROMETRY [LARGE SCALE ANALYSIS]</scope>
    <source>
        <tissue>Brain</tissue>
    </source>
</reference>
<reference key="3">
    <citation type="journal article" date="2007" name="Mol. Cell. Proteomics">
        <title>Qualitative and quantitative analyses of protein phosphorylation in naive and stimulated mouse synaptosomal preparations.</title>
        <authorList>
            <person name="Munton R.P."/>
            <person name="Tweedie-Cullen R."/>
            <person name="Livingstone-Zatchej M."/>
            <person name="Weinandy F."/>
            <person name="Waidelich M."/>
            <person name="Longo D."/>
            <person name="Gehrig P."/>
            <person name="Potthast F."/>
            <person name="Rutishauser D."/>
            <person name="Gerrits B."/>
            <person name="Panse C."/>
            <person name="Schlapbach R."/>
            <person name="Mansuy I.M."/>
        </authorList>
    </citation>
    <scope>IDENTIFICATION BY MASS SPECTROMETRY [LARGE SCALE ANALYSIS]</scope>
    <source>
        <tissue>Brain cortex</tissue>
    </source>
</reference>
<reference key="4">
    <citation type="journal article" date="2010" name="Cell">
        <title>A tissue-specific atlas of mouse protein phosphorylation and expression.</title>
        <authorList>
            <person name="Huttlin E.L."/>
            <person name="Jedrychowski M.P."/>
            <person name="Elias J.E."/>
            <person name="Goswami T."/>
            <person name="Rad R."/>
            <person name="Beausoleil S.A."/>
            <person name="Villen J."/>
            <person name="Haas W."/>
            <person name="Sowa M.E."/>
            <person name="Gygi S.P."/>
        </authorList>
    </citation>
    <scope>PHOSPHORYLATION [LARGE SCALE ANALYSIS] AT SER-47; SER-114; SER-117; SER-295; SER-297; SER-313; THR-316; SER-317; SER-318 AND SER-322</scope>
    <scope>IDENTIFICATION BY MASS SPECTROMETRY [LARGE SCALE ANALYSIS]</scope>
    <source>
        <tissue>Brain</tissue>
    </source>
</reference>
<sequence>MDSTSSLHGSSLHRPSTEQTRTDFSWDGINLSMEDTTSILPKLKRNSNAYGIGALAKSSFSGISRSMKDHVTKPTAMGQGRVAHMIEWQGWGKAPTIQPQHSHEAVRRDTDAYSDLSDGEKEARFLAGVMEQFAISEATLMAWSSMDGEDMSVNSTQEPLDCNYSDNYQELMESQDALAQAPMDGWPHSYVSQGMYCLGSSDAWEASDQSLIASPATGSYLGPAFDDSQPSLHDMGPSQPASGYSAQEPPPLLGVDTDWASEVGGVELARGPVEEEKRPLAPEEEEDAGCRDLESLSPREDPEMSTALSRKVSDVTSSGVQSFDEEEGDANN</sequence>
<proteinExistence type="evidence at protein level"/>
<keyword id="KW-0025">Alternative splicing</keyword>
<keyword id="KW-0597">Phosphoprotein</keyword>
<keyword id="KW-1185">Reference proteome</keyword>
<accession>Q3TY60</accession>
<accession>Q3TQE4</accession>
<accession>Q9D390</accession>
<name>F131B_MOUSE</name>
<evidence type="ECO:0000256" key="1">
    <source>
        <dbReference type="SAM" id="MobiDB-lite"/>
    </source>
</evidence>
<evidence type="ECO:0000303" key="2">
    <source>
    </source>
</evidence>
<evidence type="ECO:0000305" key="3"/>
<evidence type="ECO:0007744" key="4">
    <source>
    </source>
</evidence>
<evidence type="ECO:0007744" key="5">
    <source>
    </source>
</evidence>
<organism>
    <name type="scientific">Mus musculus</name>
    <name type="common">Mouse</name>
    <dbReference type="NCBI Taxonomy" id="10090"/>
    <lineage>
        <taxon>Eukaryota</taxon>
        <taxon>Metazoa</taxon>
        <taxon>Chordata</taxon>
        <taxon>Craniata</taxon>
        <taxon>Vertebrata</taxon>
        <taxon>Euteleostomi</taxon>
        <taxon>Mammalia</taxon>
        <taxon>Eutheria</taxon>
        <taxon>Euarchontoglires</taxon>
        <taxon>Glires</taxon>
        <taxon>Rodentia</taxon>
        <taxon>Myomorpha</taxon>
        <taxon>Muroidea</taxon>
        <taxon>Muridae</taxon>
        <taxon>Murinae</taxon>
        <taxon>Mus</taxon>
        <taxon>Mus</taxon>
    </lineage>
</organism>
<dbReference type="EMBL" id="AK047763">
    <property type="protein sequence ID" value="BAC33149.1"/>
    <property type="status" value="ALT_INIT"/>
    <property type="molecule type" value="mRNA"/>
</dbReference>
<dbReference type="EMBL" id="AK158869">
    <property type="protein sequence ID" value="BAE34703.1"/>
    <property type="molecule type" value="mRNA"/>
</dbReference>
<dbReference type="EMBL" id="AK163654">
    <property type="protein sequence ID" value="BAE37440.1"/>
    <property type="molecule type" value="mRNA"/>
</dbReference>
<dbReference type="EMBL" id="AK018206">
    <property type="protein sequence ID" value="BAB31120.1"/>
    <property type="status" value="ALT_INIT"/>
    <property type="molecule type" value="mRNA"/>
</dbReference>
<dbReference type="CCDS" id="CCDS51758.1">
    <molecule id="Q3TY60-2"/>
</dbReference>
<dbReference type="CCDS" id="CCDS71759.1">
    <molecule id="Q3TY60-1"/>
</dbReference>
<dbReference type="RefSeq" id="NP_001106798.1">
    <molecule id="Q3TY60-2"/>
    <property type="nucleotide sequence ID" value="NM_001113327.2"/>
</dbReference>
<dbReference type="RefSeq" id="NP_001273513.1">
    <molecule id="Q3TY60-1"/>
    <property type="nucleotide sequence ID" value="NM_001286584.1"/>
</dbReference>
<dbReference type="RefSeq" id="NP_083804.3">
    <property type="nucleotide sequence ID" value="NM_029528.5"/>
</dbReference>
<dbReference type="BioGRID" id="217993">
    <property type="interactions" value="5"/>
</dbReference>
<dbReference type="FunCoup" id="Q3TY60">
    <property type="interactions" value="1347"/>
</dbReference>
<dbReference type="IntAct" id="Q3TY60">
    <property type="interactions" value="1"/>
</dbReference>
<dbReference type="MINT" id="Q3TY60"/>
<dbReference type="STRING" id="10090.ENSMUSP00000116779"/>
<dbReference type="iPTMnet" id="Q3TY60"/>
<dbReference type="PhosphoSitePlus" id="Q3TY60"/>
<dbReference type="SwissPalm" id="Q3TY60"/>
<dbReference type="PaxDb" id="10090-ENSMUSP00000116779"/>
<dbReference type="ProteomicsDB" id="275711">
    <molecule id="Q3TY60-1"/>
</dbReference>
<dbReference type="ProteomicsDB" id="275712">
    <molecule id="Q3TY60-2"/>
</dbReference>
<dbReference type="Pumba" id="Q3TY60"/>
<dbReference type="Antibodypedia" id="18478">
    <property type="antibodies" value="40 antibodies from 10 providers"/>
</dbReference>
<dbReference type="DNASU" id="76156"/>
<dbReference type="Ensembl" id="ENSMUST00000031891.15">
    <molecule id="Q3TY60-2"/>
    <property type="protein sequence ID" value="ENSMUSP00000031891.9"/>
    <property type="gene ID" value="ENSMUSG00000029861.18"/>
</dbReference>
<dbReference type="Ensembl" id="ENSMUST00000095974.4">
    <molecule id="Q3TY60-1"/>
    <property type="protein sequence ID" value="ENSMUSP00000093670.4"/>
    <property type="gene ID" value="ENSMUSG00000029861.18"/>
</dbReference>
<dbReference type="GeneID" id="76156"/>
<dbReference type="KEGG" id="mmu:76156"/>
<dbReference type="UCSC" id="uc009bqv.3">
    <molecule id="Q3TY60-2"/>
    <property type="organism name" value="mouse"/>
</dbReference>
<dbReference type="UCSC" id="uc033ipo.1">
    <molecule id="Q3TY60-1"/>
    <property type="organism name" value="mouse"/>
</dbReference>
<dbReference type="AGR" id="MGI:1923406"/>
<dbReference type="CTD" id="9715"/>
<dbReference type="MGI" id="MGI:1923406">
    <property type="gene designation" value="Fam131b"/>
</dbReference>
<dbReference type="VEuPathDB" id="HostDB:ENSMUSG00000029861"/>
<dbReference type="eggNOG" id="ENOG502QXPE">
    <property type="taxonomic scope" value="Eukaryota"/>
</dbReference>
<dbReference type="GeneTree" id="ENSGT00950000183106"/>
<dbReference type="HOGENOM" id="CLU_047357_1_0_1"/>
<dbReference type="InParanoid" id="Q3TY60"/>
<dbReference type="OrthoDB" id="8899318at2759"/>
<dbReference type="PhylomeDB" id="Q3TY60"/>
<dbReference type="BioGRID-ORCS" id="76156">
    <property type="hits" value="1 hit in 76 CRISPR screens"/>
</dbReference>
<dbReference type="CD-CODE" id="CE726F99">
    <property type="entry name" value="Postsynaptic density"/>
</dbReference>
<dbReference type="PRO" id="PR:Q3TY60"/>
<dbReference type="Proteomes" id="UP000000589">
    <property type="component" value="Chromosome 6"/>
</dbReference>
<dbReference type="RNAct" id="Q3TY60">
    <property type="molecule type" value="protein"/>
</dbReference>
<dbReference type="Bgee" id="ENSMUSG00000029861">
    <property type="expression patterns" value="Expressed in cerebellum lobe and 108 other cell types or tissues"/>
</dbReference>
<dbReference type="ExpressionAtlas" id="Q3TY60">
    <property type="expression patterns" value="baseline and differential"/>
</dbReference>
<dbReference type="InterPro" id="IPR026782">
    <property type="entry name" value="FAM131"/>
</dbReference>
<dbReference type="PANTHER" id="PTHR15736:SF9">
    <property type="entry name" value="PROTEIN FAM131B"/>
    <property type="match status" value="1"/>
</dbReference>
<dbReference type="PANTHER" id="PTHR15736">
    <property type="entry name" value="PROTEIN FAM131B-RELATED"/>
    <property type="match status" value="1"/>
</dbReference>
<dbReference type="Pfam" id="PF15010">
    <property type="entry name" value="FAM131"/>
    <property type="match status" value="1"/>
</dbReference>
<feature type="chain" id="PRO_0000253033" description="Protein FAM131B">
    <location>
        <begin position="1"/>
        <end position="332"/>
    </location>
</feature>
<feature type="region of interest" description="Disordered" evidence="1">
    <location>
        <begin position="1"/>
        <end position="22"/>
    </location>
</feature>
<feature type="region of interest" description="Disordered" evidence="1">
    <location>
        <begin position="95"/>
        <end position="114"/>
    </location>
</feature>
<feature type="region of interest" description="Disordered" evidence="1">
    <location>
        <begin position="221"/>
        <end position="332"/>
    </location>
</feature>
<feature type="compositionally biased region" description="Basic and acidic residues" evidence="1">
    <location>
        <begin position="101"/>
        <end position="111"/>
    </location>
</feature>
<feature type="compositionally biased region" description="Basic and acidic residues" evidence="1">
    <location>
        <begin position="272"/>
        <end position="281"/>
    </location>
</feature>
<feature type="compositionally biased region" description="Basic and acidic residues" evidence="1">
    <location>
        <begin position="288"/>
        <end position="302"/>
    </location>
</feature>
<feature type="compositionally biased region" description="Acidic residues" evidence="1">
    <location>
        <begin position="323"/>
        <end position="332"/>
    </location>
</feature>
<feature type="modified residue" description="Phosphoserine" evidence="5">
    <location>
        <position position="47"/>
    </location>
</feature>
<feature type="modified residue" description="Phosphoserine" evidence="5">
    <location>
        <position position="114"/>
    </location>
</feature>
<feature type="modified residue" description="Phosphoserine" evidence="4 5">
    <location>
        <position position="117"/>
    </location>
</feature>
<feature type="modified residue" description="Phosphoserine" evidence="5">
    <location>
        <position position="295"/>
    </location>
</feature>
<feature type="modified residue" description="Phosphoserine" evidence="5">
    <location>
        <position position="297"/>
    </location>
</feature>
<feature type="modified residue" description="Phosphoserine" evidence="5">
    <location>
        <position position="313"/>
    </location>
</feature>
<feature type="modified residue" description="Phosphothreonine" evidence="5">
    <location>
        <position position="316"/>
    </location>
</feature>
<feature type="modified residue" description="Phosphoserine" evidence="5">
    <location>
        <position position="317"/>
    </location>
</feature>
<feature type="modified residue" description="Phosphoserine" evidence="5">
    <location>
        <position position="318"/>
    </location>
</feature>
<feature type="modified residue" description="Phosphoserine" evidence="4 5">
    <location>
        <position position="322"/>
    </location>
</feature>
<feature type="splice variant" id="VSP_020994" description="In isoform 2." evidence="2">
    <original>M</original>
    <variation>MGCIGSRTVGNEVIAVDWKGLKDVDQINM</variation>
    <location>
        <position position="1"/>
    </location>
</feature>
<feature type="splice variant" id="VSP_020995" description="In isoform 2." evidence="2">
    <location>
        <begin position="19"/>
        <end position="30"/>
    </location>
</feature>
<comment type="alternative products">
    <event type="alternative splicing"/>
    <isoform>
        <id>Q3TY60-1</id>
        <name>1</name>
        <sequence type="displayed"/>
    </isoform>
    <isoform>
        <id>Q3TY60-2</id>
        <name>2</name>
        <sequence type="described" ref="VSP_020994 VSP_020995"/>
    </isoform>
</comment>
<comment type="similarity">
    <text evidence="3">Belongs to the FAM131 family.</text>
</comment>
<comment type="sequence caution" evidence="3">
    <conflict type="erroneous initiation">
        <sequence resource="EMBL-CDS" id="BAB31120"/>
    </conflict>
</comment>
<comment type="sequence caution" evidence="3">
    <conflict type="erroneous initiation">
        <sequence resource="EMBL-CDS" id="BAC33149"/>
    </conflict>
</comment>
<protein>
    <recommendedName>
        <fullName>Protein FAM131B</fullName>
    </recommendedName>
</protein>